<protein>
    <recommendedName>
        <fullName evidence="1">Tyrosine--tRNA ligase</fullName>
        <ecNumber evidence="1">6.1.1.1</ecNumber>
    </recommendedName>
    <alternativeName>
        <fullName evidence="1">Tyrosyl-tRNA synthetase</fullName>
        <shortName evidence="1">TyrRS</shortName>
    </alternativeName>
</protein>
<accession>Q5NGY5</accession>
<comment type="function">
    <text evidence="1">Catalyzes the attachment of tyrosine to tRNA(Tyr) in a two-step reaction: tyrosine is first activated by ATP to form Tyr-AMP and then transferred to the acceptor end of tRNA(Tyr).</text>
</comment>
<comment type="catalytic activity">
    <reaction evidence="1">
        <text>tRNA(Tyr) + L-tyrosine + ATP = L-tyrosyl-tRNA(Tyr) + AMP + diphosphate + H(+)</text>
        <dbReference type="Rhea" id="RHEA:10220"/>
        <dbReference type="Rhea" id="RHEA-COMP:9706"/>
        <dbReference type="Rhea" id="RHEA-COMP:9707"/>
        <dbReference type="ChEBI" id="CHEBI:15378"/>
        <dbReference type="ChEBI" id="CHEBI:30616"/>
        <dbReference type="ChEBI" id="CHEBI:33019"/>
        <dbReference type="ChEBI" id="CHEBI:58315"/>
        <dbReference type="ChEBI" id="CHEBI:78442"/>
        <dbReference type="ChEBI" id="CHEBI:78536"/>
        <dbReference type="ChEBI" id="CHEBI:456215"/>
        <dbReference type="EC" id="6.1.1.1"/>
    </reaction>
</comment>
<comment type="subunit">
    <text evidence="1">Homodimer.</text>
</comment>
<comment type="subcellular location">
    <subcellularLocation>
        <location evidence="1">Cytoplasm</location>
    </subcellularLocation>
</comment>
<comment type="similarity">
    <text evidence="1">Belongs to the class-I aminoacyl-tRNA synthetase family. TyrS type 2 subfamily.</text>
</comment>
<name>SYY_FRATT</name>
<proteinExistence type="inferred from homology"/>
<feature type="chain" id="PRO_0000236719" description="Tyrosine--tRNA ligase">
    <location>
        <begin position="1"/>
        <end position="396"/>
    </location>
</feature>
<feature type="domain" description="S4 RNA-binding" evidence="1">
    <location>
        <begin position="334"/>
        <end position="395"/>
    </location>
</feature>
<feature type="short sequence motif" description="'HIGH' region">
    <location>
        <begin position="42"/>
        <end position="51"/>
    </location>
</feature>
<feature type="short sequence motif" description="'KMSKS' region">
    <location>
        <begin position="226"/>
        <end position="230"/>
    </location>
</feature>
<feature type="binding site" evidence="1">
    <location>
        <position position="229"/>
    </location>
    <ligand>
        <name>ATP</name>
        <dbReference type="ChEBI" id="CHEBI:30616"/>
    </ligand>
</feature>
<reference key="1">
    <citation type="journal article" date="2005" name="Nat. Genet.">
        <title>The complete genome sequence of Francisella tularensis, the causative agent of tularemia.</title>
        <authorList>
            <person name="Larsson P."/>
            <person name="Oyston P.C.F."/>
            <person name="Chain P."/>
            <person name="Chu M.C."/>
            <person name="Duffield M."/>
            <person name="Fuxelius H.-H."/>
            <person name="Garcia E."/>
            <person name="Haelltorp G."/>
            <person name="Johansson D."/>
            <person name="Isherwood K.E."/>
            <person name="Karp P.D."/>
            <person name="Larsson E."/>
            <person name="Liu Y."/>
            <person name="Michell S."/>
            <person name="Prior J."/>
            <person name="Prior R."/>
            <person name="Malfatti S."/>
            <person name="Sjoestedt A."/>
            <person name="Svensson K."/>
            <person name="Thompson N."/>
            <person name="Vergez L."/>
            <person name="Wagg J.K."/>
            <person name="Wren B.W."/>
            <person name="Lindler L.E."/>
            <person name="Andersson S.G.E."/>
            <person name="Forsman M."/>
            <person name="Titball R.W."/>
        </authorList>
    </citation>
    <scope>NUCLEOTIDE SEQUENCE [LARGE SCALE GENOMIC DNA]</scope>
    <source>
        <strain>SCHU S4 / Schu 4</strain>
    </source>
</reference>
<sequence>MSSIKETLEIIKRGADEVLIEEELIKKLQKHKPLIIKFGCDPTAPDIHLGHTVVINKLKQLQDLGHKIHFLIGDFTAQIGDPTGKNATRPPLTAEEVAANAETYTKQVFKILDKDKTIIRRNGDWFNKMSASEMIKLASKSTVARMLERDDFSKRYKGGQSISIHEFLYPLVQGYDSVAMNADIELGGTDQKFNLLMGRELQKQQGQEPQVIITMPLLEGLDGVKKMSKSSQNYIGIEEPANEIFGKIMSISDEFMWRYYELLSFKSLENIAKLKQDVAAGANPRDIKIELAKELIERFHSKEDAESAHQDFIQRFQKNQIPDDINVVELNQELPIANLLKEAGLVASTSEANRMIQQGAVKIDGEKLSDAKIIFAKGTNNVFQVGKRKFAKIIIK</sequence>
<dbReference type="EC" id="6.1.1.1" evidence="1"/>
<dbReference type="EMBL" id="AJ749949">
    <property type="protein sequence ID" value="CAG45324.1"/>
    <property type="molecule type" value="Genomic_DNA"/>
</dbReference>
<dbReference type="RefSeq" id="WP_003020488.1">
    <property type="nucleotide sequence ID" value="NC_006570.2"/>
</dbReference>
<dbReference type="RefSeq" id="YP_169707.1">
    <property type="nucleotide sequence ID" value="NC_006570.2"/>
</dbReference>
<dbReference type="SMR" id="Q5NGY5"/>
<dbReference type="STRING" id="177416.FTT_0691"/>
<dbReference type="DNASU" id="3191006"/>
<dbReference type="EnsemblBacteria" id="CAG45324">
    <property type="protein sequence ID" value="CAG45324"/>
    <property type="gene ID" value="FTT_0691"/>
</dbReference>
<dbReference type="KEGG" id="ftu:FTT_0691"/>
<dbReference type="eggNOG" id="COG0162">
    <property type="taxonomic scope" value="Bacteria"/>
</dbReference>
<dbReference type="OrthoDB" id="9804243at2"/>
<dbReference type="Proteomes" id="UP000001174">
    <property type="component" value="Chromosome"/>
</dbReference>
<dbReference type="GO" id="GO:0005829">
    <property type="term" value="C:cytosol"/>
    <property type="evidence" value="ECO:0007669"/>
    <property type="project" value="TreeGrafter"/>
</dbReference>
<dbReference type="GO" id="GO:0005524">
    <property type="term" value="F:ATP binding"/>
    <property type="evidence" value="ECO:0007669"/>
    <property type="project" value="UniProtKB-UniRule"/>
</dbReference>
<dbReference type="GO" id="GO:0003723">
    <property type="term" value="F:RNA binding"/>
    <property type="evidence" value="ECO:0007669"/>
    <property type="project" value="UniProtKB-KW"/>
</dbReference>
<dbReference type="GO" id="GO:0004831">
    <property type="term" value="F:tyrosine-tRNA ligase activity"/>
    <property type="evidence" value="ECO:0007669"/>
    <property type="project" value="UniProtKB-UniRule"/>
</dbReference>
<dbReference type="GO" id="GO:0006437">
    <property type="term" value="P:tyrosyl-tRNA aminoacylation"/>
    <property type="evidence" value="ECO:0007669"/>
    <property type="project" value="UniProtKB-UniRule"/>
</dbReference>
<dbReference type="CDD" id="cd00165">
    <property type="entry name" value="S4"/>
    <property type="match status" value="1"/>
</dbReference>
<dbReference type="CDD" id="cd00805">
    <property type="entry name" value="TyrRS_core"/>
    <property type="match status" value="1"/>
</dbReference>
<dbReference type="FunFam" id="1.10.240.10:FF:000006">
    <property type="entry name" value="Tyrosine--tRNA ligase"/>
    <property type="match status" value="1"/>
</dbReference>
<dbReference type="FunFam" id="3.10.290.10:FF:000022">
    <property type="entry name" value="Tyrosine--tRNA ligase"/>
    <property type="match status" value="1"/>
</dbReference>
<dbReference type="FunFam" id="3.40.50.620:FF:000061">
    <property type="entry name" value="Tyrosine--tRNA ligase"/>
    <property type="match status" value="1"/>
</dbReference>
<dbReference type="Gene3D" id="3.40.50.620">
    <property type="entry name" value="HUPs"/>
    <property type="match status" value="1"/>
</dbReference>
<dbReference type="Gene3D" id="3.10.290.10">
    <property type="entry name" value="RNA-binding S4 domain"/>
    <property type="match status" value="1"/>
</dbReference>
<dbReference type="Gene3D" id="1.10.240.10">
    <property type="entry name" value="Tyrosyl-Transfer RNA Synthetase"/>
    <property type="match status" value="1"/>
</dbReference>
<dbReference type="HAMAP" id="MF_02007">
    <property type="entry name" value="Tyr_tRNA_synth_type2"/>
    <property type="match status" value="1"/>
</dbReference>
<dbReference type="InterPro" id="IPR001412">
    <property type="entry name" value="aa-tRNA-synth_I_CS"/>
</dbReference>
<dbReference type="InterPro" id="IPR002305">
    <property type="entry name" value="aa-tRNA-synth_Ic"/>
</dbReference>
<dbReference type="InterPro" id="IPR014729">
    <property type="entry name" value="Rossmann-like_a/b/a_fold"/>
</dbReference>
<dbReference type="InterPro" id="IPR002942">
    <property type="entry name" value="S4_RNA-bd"/>
</dbReference>
<dbReference type="InterPro" id="IPR036986">
    <property type="entry name" value="S4_RNA-bd_sf"/>
</dbReference>
<dbReference type="InterPro" id="IPR002307">
    <property type="entry name" value="Tyr-tRNA-ligase"/>
</dbReference>
<dbReference type="InterPro" id="IPR024088">
    <property type="entry name" value="Tyr-tRNA-ligase_bac-type"/>
</dbReference>
<dbReference type="InterPro" id="IPR024108">
    <property type="entry name" value="Tyr-tRNA-ligase_bac_2"/>
</dbReference>
<dbReference type="NCBIfam" id="TIGR00234">
    <property type="entry name" value="tyrS"/>
    <property type="match status" value="1"/>
</dbReference>
<dbReference type="PANTHER" id="PTHR11766:SF1">
    <property type="entry name" value="TYROSINE--TRNA LIGASE"/>
    <property type="match status" value="1"/>
</dbReference>
<dbReference type="PANTHER" id="PTHR11766">
    <property type="entry name" value="TYROSYL-TRNA SYNTHETASE"/>
    <property type="match status" value="1"/>
</dbReference>
<dbReference type="Pfam" id="PF01479">
    <property type="entry name" value="S4"/>
    <property type="match status" value="1"/>
</dbReference>
<dbReference type="Pfam" id="PF00579">
    <property type="entry name" value="tRNA-synt_1b"/>
    <property type="match status" value="1"/>
</dbReference>
<dbReference type="PRINTS" id="PR01040">
    <property type="entry name" value="TRNASYNTHTYR"/>
</dbReference>
<dbReference type="SMART" id="SM00363">
    <property type="entry name" value="S4"/>
    <property type="match status" value="1"/>
</dbReference>
<dbReference type="SUPFAM" id="SSF55174">
    <property type="entry name" value="Alpha-L RNA-binding motif"/>
    <property type="match status" value="1"/>
</dbReference>
<dbReference type="SUPFAM" id="SSF52374">
    <property type="entry name" value="Nucleotidylyl transferase"/>
    <property type="match status" value="1"/>
</dbReference>
<dbReference type="PROSITE" id="PS00178">
    <property type="entry name" value="AA_TRNA_LIGASE_I"/>
    <property type="match status" value="1"/>
</dbReference>
<dbReference type="PROSITE" id="PS50889">
    <property type="entry name" value="S4"/>
    <property type="match status" value="1"/>
</dbReference>
<gene>
    <name evidence="1" type="primary">tyrS</name>
    <name type="ordered locus">FTT_0691</name>
</gene>
<organism>
    <name type="scientific">Francisella tularensis subsp. tularensis (strain SCHU S4 / Schu 4)</name>
    <dbReference type="NCBI Taxonomy" id="177416"/>
    <lineage>
        <taxon>Bacteria</taxon>
        <taxon>Pseudomonadati</taxon>
        <taxon>Pseudomonadota</taxon>
        <taxon>Gammaproteobacteria</taxon>
        <taxon>Thiotrichales</taxon>
        <taxon>Francisellaceae</taxon>
        <taxon>Francisella</taxon>
    </lineage>
</organism>
<evidence type="ECO:0000255" key="1">
    <source>
        <dbReference type="HAMAP-Rule" id="MF_02007"/>
    </source>
</evidence>
<keyword id="KW-0030">Aminoacyl-tRNA synthetase</keyword>
<keyword id="KW-0067">ATP-binding</keyword>
<keyword id="KW-0963">Cytoplasm</keyword>
<keyword id="KW-0436">Ligase</keyword>
<keyword id="KW-0547">Nucleotide-binding</keyword>
<keyword id="KW-0648">Protein biosynthesis</keyword>
<keyword id="KW-1185">Reference proteome</keyword>
<keyword id="KW-0694">RNA-binding</keyword>